<dbReference type="EMBL" id="AM777385">
    <property type="protein sequence ID" value="CAO85972.1"/>
    <property type="molecule type" value="Genomic_DNA"/>
</dbReference>
<dbReference type="RefSeq" id="YP_001531279.1">
    <property type="nucleotide sequence ID" value="NC_009950.1"/>
</dbReference>
<dbReference type="SMR" id="A8Y9G6"/>
<dbReference type="GeneID" id="5696585"/>
<dbReference type="KEGG" id="lper:5696585"/>
<dbReference type="GO" id="GO:0009535">
    <property type="term" value="C:chloroplast thylakoid membrane"/>
    <property type="evidence" value="ECO:0007669"/>
    <property type="project" value="UniProtKB-SubCell"/>
</dbReference>
<dbReference type="GO" id="GO:0045259">
    <property type="term" value="C:proton-transporting ATP synthase complex"/>
    <property type="evidence" value="ECO:0007669"/>
    <property type="project" value="UniProtKB-KW"/>
</dbReference>
<dbReference type="GO" id="GO:0046933">
    <property type="term" value="F:proton-transporting ATP synthase activity, rotational mechanism"/>
    <property type="evidence" value="ECO:0007669"/>
    <property type="project" value="UniProtKB-UniRule"/>
</dbReference>
<dbReference type="CDD" id="cd06503">
    <property type="entry name" value="ATP-synt_Fo_b"/>
    <property type="match status" value="1"/>
</dbReference>
<dbReference type="HAMAP" id="MF_01398">
    <property type="entry name" value="ATP_synth_b_bprime"/>
    <property type="match status" value="1"/>
</dbReference>
<dbReference type="InterPro" id="IPR002146">
    <property type="entry name" value="ATP_synth_b/b'su_bac/chlpt"/>
</dbReference>
<dbReference type="PANTHER" id="PTHR34264">
    <property type="entry name" value="ATP SYNTHASE SUBUNIT B, CHLOROPLASTIC"/>
    <property type="match status" value="1"/>
</dbReference>
<dbReference type="PANTHER" id="PTHR34264:SF8">
    <property type="entry name" value="ATP SYNTHASE SUBUNIT B, CHLOROPLASTIC"/>
    <property type="match status" value="1"/>
</dbReference>
<dbReference type="Pfam" id="PF00430">
    <property type="entry name" value="ATP-synt_B"/>
    <property type="match status" value="1"/>
</dbReference>
<name>ATPF_LOLPR</name>
<organism>
    <name type="scientific">Lolium perenne</name>
    <name type="common">Perennial ryegrass</name>
    <dbReference type="NCBI Taxonomy" id="4522"/>
    <lineage>
        <taxon>Eukaryota</taxon>
        <taxon>Viridiplantae</taxon>
        <taxon>Streptophyta</taxon>
        <taxon>Embryophyta</taxon>
        <taxon>Tracheophyta</taxon>
        <taxon>Spermatophyta</taxon>
        <taxon>Magnoliopsida</taxon>
        <taxon>Liliopsida</taxon>
        <taxon>Poales</taxon>
        <taxon>Poaceae</taxon>
        <taxon>BOP clade</taxon>
        <taxon>Pooideae</taxon>
        <taxon>Poodae</taxon>
        <taxon>Poeae</taxon>
        <taxon>Poeae Chloroplast Group 2 (Poeae type)</taxon>
        <taxon>Loliodinae</taxon>
        <taxon>Loliinae</taxon>
        <taxon>Lolium</taxon>
    </lineage>
</organism>
<evidence type="ECO:0000255" key="1">
    <source>
        <dbReference type="HAMAP-Rule" id="MF_01398"/>
    </source>
</evidence>
<proteinExistence type="inferred from homology"/>
<keyword id="KW-0066">ATP synthesis</keyword>
<keyword id="KW-0138">CF(0)</keyword>
<keyword id="KW-0150">Chloroplast</keyword>
<keyword id="KW-0375">Hydrogen ion transport</keyword>
<keyword id="KW-0406">Ion transport</keyword>
<keyword id="KW-0472">Membrane</keyword>
<keyword id="KW-0934">Plastid</keyword>
<keyword id="KW-0793">Thylakoid</keyword>
<keyword id="KW-0812">Transmembrane</keyword>
<keyword id="KW-1133">Transmembrane helix</keyword>
<keyword id="KW-0813">Transport</keyword>
<reference key="1">
    <citation type="journal article" date="2008" name="PLoS ONE">
        <title>An optimized chloroplast DNA extraction protocol for grasses (Poaceae) proves suitable for whole plastid genome sequencing and SNP detection.</title>
        <authorList>
            <person name="Diekmann K."/>
            <person name="Hodkinson T.R."/>
            <person name="Fricke E."/>
            <person name="Barth S."/>
        </authorList>
    </citation>
    <scope>NUCLEOTIDE SEQUENCE [LARGE SCALE GENOMIC DNA]</scope>
    <source>
        <strain>cv. Cashel</strain>
    </source>
</reference>
<sequence length="183" mass="20980">MKNVTHSFVFLAHWPSAGSFGLNTNILATNLINLTVVVGVLIFFGKGVLKDLLDNRKQRILSTIRNSEELRRGTIEKLEKARIRLQKVELEADEYRMNGYSDIEREKANLINATSISLEQLEKSKNETLYFEKQRAMNQVRQRVFQQAVQGALGTLNSCLNTELHFRTIRANIGILGSMEWKR</sequence>
<protein>
    <recommendedName>
        <fullName evidence="1">ATP synthase subunit b, chloroplastic</fullName>
    </recommendedName>
    <alternativeName>
        <fullName evidence="1">ATP synthase F(0) sector subunit b</fullName>
    </alternativeName>
    <alternativeName>
        <fullName evidence="1">ATPase subunit I</fullName>
    </alternativeName>
</protein>
<geneLocation type="chloroplast"/>
<comment type="function">
    <text evidence="1">F(1)F(0) ATP synthase produces ATP from ADP in the presence of a proton or sodium gradient. F-type ATPases consist of two structural domains, F(1) containing the extramembraneous catalytic core and F(0) containing the membrane proton channel, linked together by a central stalk and a peripheral stalk. During catalysis, ATP synthesis in the catalytic domain of F(1) is coupled via a rotary mechanism of the central stalk subunits to proton translocation.</text>
</comment>
<comment type="function">
    <text evidence="1">Component of the F(0) channel, it forms part of the peripheral stalk, linking F(1) to F(0).</text>
</comment>
<comment type="subunit">
    <text evidence="1">F-type ATPases have 2 components, F(1) - the catalytic core - and F(0) - the membrane proton channel. F(1) has five subunits: alpha(3), beta(3), gamma(1), delta(1), epsilon(1). F(0) has four main subunits: a(1), b(1), b'(1) and c(10-14). The alpha and beta chains form an alternating ring which encloses part of the gamma chain. F(1) is attached to F(0) by a central stalk formed by the gamma and epsilon chains, while a peripheral stalk is formed by the delta, b and b' chains.</text>
</comment>
<comment type="subcellular location">
    <subcellularLocation>
        <location evidence="1">Plastid</location>
        <location evidence="1">Chloroplast thylakoid membrane</location>
        <topology evidence="1">Single-pass membrane protein</topology>
    </subcellularLocation>
</comment>
<comment type="miscellaneous">
    <text>In plastids the F-type ATPase is also known as CF(1)CF(0).</text>
</comment>
<comment type="similarity">
    <text evidence="1">Belongs to the ATPase B chain family.</text>
</comment>
<accession>A8Y9G6</accession>
<feature type="chain" id="PRO_0000368950" description="ATP synthase subunit b, chloroplastic">
    <location>
        <begin position="1"/>
        <end position="183"/>
    </location>
</feature>
<feature type="transmembrane region" description="Helical" evidence="1">
    <location>
        <begin position="27"/>
        <end position="49"/>
    </location>
</feature>
<gene>
    <name evidence="1" type="primary">atpF</name>
    <name type="ordered locus">LopeCp029</name>
</gene>